<comment type="function">
    <text evidence="2">Transfers the 4'-phosphopantetheine moiety from coenzyme A to a Ser of acyl-carrier-protein.</text>
</comment>
<comment type="catalytic activity">
    <reaction evidence="2">
        <text>apo-[ACP] + CoA = holo-[ACP] + adenosine 3',5'-bisphosphate + H(+)</text>
        <dbReference type="Rhea" id="RHEA:12068"/>
        <dbReference type="Rhea" id="RHEA-COMP:9685"/>
        <dbReference type="Rhea" id="RHEA-COMP:9690"/>
        <dbReference type="ChEBI" id="CHEBI:15378"/>
        <dbReference type="ChEBI" id="CHEBI:29999"/>
        <dbReference type="ChEBI" id="CHEBI:57287"/>
        <dbReference type="ChEBI" id="CHEBI:58343"/>
        <dbReference type="ChEBI" id="CHEBI:64479"/>
        <dbReference type="EC" id="2.7.8.7"/>
    </reaction>
</comment>
<comment type="cofactor">
    <cofactor evidence="2">
        <name>Mg(2+)</name>
        <dbReference type="ChEBI" id="CHEBI:18420"/>
    </cofactor>
</comment>
<comment type="subunit">
    <text evidence="1">Homodimer.</text>
</comment>
<comment type="subcellular location">
    <subcellularLocation>
        <location evidence="2">Cytoplasm</location>
    </subcellularLocation>
</comment>
<comment type="similarity">
    <text evidence="2">Belongs to the P-Pant transferase superfamily. AcpS family.</text>
</comment>
<sequence length="126" mass="14070">MAILGLGTDIVEIARIEAVISRSGERLARRVLSDNEWAIWETHQQPVRFLAKRFAVKEAAAKAFGTGIRNGLAFNQFEVFNDELGKPRLRLWGEALTLAEKLGVAHMHVTLADERHYACATVILES</sequence>
<proteinExistence type="inferred from homology"/>
<dbReference type="EC" id="2.7.8.7" evidence="2"/>
<dbReference type="EMBL" id="AL513382">
    <property type="protein sequence ID" value="CAD02779.1"/>
    <property type="molecule type" value="Genomic_DNA"/>
</dbReference>
<dbReference type="EMBL" id="AE014613">
    <property type="protein sequence ID" value="AAO68005.1"/>
    <property type="molecule type" value="Genomic_DNA"/>
</dbReference>
<dbReference type="RefSeq" id="NP_457106.1">
    <property type="nucleotide sequence ID" value="NC_003198.1"/>
</dbReference>
<dbReference type="RefSeq" id="WP_000986043.1">
    <property type="nucleotide sequence ID" value="NZ_WSUR01000007.1"/>
</dbReference>
<dbReference type="SMR" id="P63467"/>
<dbReference type="STRING" id="220341.gene:17586713"/>
<dbReference type="GeneID" id="66757004"/>
<dbReference type="KEGG" id="stt:t0280"/>
<dbReference type="KEGG" id="sty:STY2823"/>
<dbReference type="PATRIC" id="fig|220341.7.peg.2871"/>
<dbReference type="eggNOG" id="COG0736">
    <property type="taxonomic scope" value="Bacteria"/>
</dbReference>
<dbReference type="HOGENOM" id="CLU_089696_3_1_6"/>
<dbReference type="OMA" id="DERHYAV"/>
<dbReference type="OrthoDB" id="517356at2"/>
<dbReference type="Proteomes" id="UP000000541">
    <property type="component" value="Chromosome"/>
</dbReference>
<dbReference type="Proteomes" id="UP000002670">
    <property type="component" value="Chromosome"/>
</dbReference>
<dbReference type="GO" id="GO:0005737">
    <property type="term" value="C:cytoplasm"/>
    <property type="evidence" value="ECO:0007669"/>
    <property type="project" value="UniProtKB-SubCell"/>
</dbReference>
<dbReference type="GO" id="GO:0008897">
    <property type="term" value="F:holo-[acyl-carrier-protein] synthase activity"/>
    <property type="evidence" value="ECO:0007669"/>
    <property type="project" value="UniProtKB-UniRule"/>
</dbReference>
<dbReference type="GO" id="GO:0000287">
    <property type="term" value="F:magnesium ion binding"/>
    <property type="evidence" value="ECO:0007669"/>
    <property type="project" value="UniProtKB-UniRule"/>
</dbReference>
<dbReference type="GO" id="GO:0006633">
    <property type="term" value="P:fatty acid biosynthetic process"/>
    <property type="evidence" value="ECO:0007669"/>
    <property type="project" value="UniProtKB-UniRule"/>
</dbReference>
<dbReference type="FunFam" id="3.90.470.20:FF:000001">
    <property type="entry name" value="Holo-[acyl-carrier-protein] synthase"/>
    <property type="match status" value="1"/>
</dbReference>
<dbReference type="Gene3D" id="3.90.470.20">
    <property type="entry name" value="4'-phosphopantetheinyl transferase domain"/>
    <property type="match status" value="1"/>
</dbReference>
<dbReference type="HAMAP" id="MF_00101">
    <property type="entry name" value="AcpS"/>
    <property type="match status" value="1"/>
</dbReference>
<dbReference type="InterPro" id="IPR008278">
    <property type="entry name" value="4-PPantetheinyl_Trfase_dom"/>
</dbReference>
<dbReference type="InterPro" id="IPR037143">
    <property type="entry name" value="4-PPantetheinyl_Trfase_dom_sf"/>
</dbReference>
<dbReference type="InterPro" id="IPR002582">
    <property type="entry name" value="ACPS"/>
</dbReference>
<dbReference type="InterPro" id="IPR004568">
    <property type="entry name" value="Ppantetheine-prot_Trfase_dom"/>
</dbReference>
<dbReference type="NCBIfam" id="TIGR00516">
    <property type="entry name" value="acpS"/>
    <property type="match status" value="1"/>
</dbReference>
<dbReference type="NCBIfam" id="TIGR00556">
    <property type="entry name" value="pantethn_trn"/>
    <property type="match status" value="1"/>
</dbReference>
<dbReference type="Pfam" id="PF01648">
    <property type="entry name" value="ACPS"/>
    <property type="match status" value="1"/>
</dbReference>
<dbReference type="SUPFAM" id="SSF56214">
    <property type="entry name" value="4'-phosphopantetheinyl transferase"/>
    <property type="match status" value="1"/>
</dbReference>
<gene>
    <name evidence="2" type="primary">acpS</name>
    <name type="synonym">dpj</name>
    <name type="ordered locus">STY2823</name>
    <name type="ordered locus">t0280</name>
</gene>
<protein>
    <recommendedName>
        <fullName evidence="2">Holo-[acyl-carrier-protein] synthase</fullName>
        <shortName evidence="2">Holo-ACP synthase</shortName>
        <ecNumber evidence="2">2.7.8.7</ecNumber>
    </recommendedName>
    <alternativeName>
        <fullName evidence="2">4'-phosphopantetheinyl transferase AcpS</fullName>
    </alternativeName>
</protein>
<keyword id="KW-0963">Cytoplasm</keyword>
<keyword id="KW-0275">Fatty acid biosynthesis</keyword>
<keyword id="KW-0276">Fatty acid metabolism</keyword>
<keyword id="KW-0444">Lipid biosynthesis</keyword>
<keyword id="KW-0443">Lipid metabolism</keyword>
<keyword id="KW-0460">Magnesium</keyword>
<keyword id="KW-0479">Metal-binding</keyword>
<keyword id="KW-0808">Transferase</keyword>
<evidence type="ECO:0000250" key="1"/>
<evidence type="ECO:0000255" key="2">
    <source>
        <dbReference type="HAMAP-Rule" id="MF_00101"/>
    </source>
</evidence>
<feature type="initiator methionine" description="Removed" evidence="1">
    <location>
        <position position="1"/>
    </location>
</feature>
<feature type="chain" id="PRO_0000175695" description="Holo-[acyl-carrier-protein] synthase">
    <location>
        <begin position="2"/>
        <end position="126"/>
    </location>
</feature>
<feature type="binding site" evidence="2">
    <location>
        <position position="9"/>
    </location>
    <ligand>
        <name>Mg(2+)</name>
        <dbReference type="ChEBI" id="CHEBI:18420"/>
    </ligand>
</feature>
<feature type="binding site" evidence="2">
    <location>
        <position position="58"/>
    </location>
    <ligand>
        <name>Mg(2+)</name>
        <dbReference type="ChEBI" id="CHEBI:18420"/>
    </ligand>
</feature>
<name>ACPS_SALTI</name>
<accession>P63467</accession>
<accession>Q8XFU3</accession>
<reference key="1">
    <citation type="journal article" date="2001" name="Nature">
        <title>Complete genome sequence of a multiple drug resistant Salmonella enterica serovar Typhi CT18.</title>
        <authorList>
            <person name="Parkhill J."/>
            <person name="Dougan G."/>
            <person name="James K.D."/>
            <person name="Thomson N.R."/>
            <person name="Pickard D."/>
            <person name="Wain J."/>
            <person name="Churcher C.M."/>
            <person name="Mungall K.L."/>
            <person name="Bentley S.D."/>
            <person name="Holden M.T.G."/>
            <person name="Sebaihia M."/>
            <person name="Baker S."/>
            <person name="Basham D."/>
            <person name="Brooks K."/>
            <person name="Chillingworth T."/>
            <person name="Connerton P."/>
            <person name="Cronin A."/>
            <person name="Davis P."/>
            <person name="Davies R.M."/>
            <person name="Dowd L."/>
            <person name="White N."/>
            <person name="Farrar J."/>
            <person name="Feltwell T."/>
            <person name="Hamlin N."/>
            <person name="Haque A."/>
            <person name="Hien T.T."/>
            <person name="Holroyd S."/>
            <person name="Jagels K."/>
            <person name="Krogh A."/>
            <person name="Larsen T.S."/>
            <person name="Leather S."/>
            <person name="Moule S."/>
            <person name="O'Gaora P."/>
            <person name="Parry C."/>
            <person name="Quail M.A."/>
            <person name="Rutherford K.M."/>
            <person name="Simmonds M."/>
            <person name="Skelton J."/>
            <person name="Stevens K."/>
            <person name="Whitehead S."/>
            <person name="Barrell B.G."/>
        </authorList>
    </citation>
    <scope>NUCLEOTIDE SEQUENCE [LARGE SCALE GENOMIC DNA]</scope>
    <source>
        <strain>CT18</strain>
    </source>
</reference>
<reference key="2">
    <citation type="journal article" date="2003" name="J. Bacteriol.">
        <title>Comparative genomics of Salmonella enterica serovar Typhi strains Ty2 and CT18.</title>
        <authorList>
            <person name="Deng W."/>
            <person name="Liou S.-R."/>
            <person name="Plunkett G. III"/>
            <person name="Mayhew G.F."/>
            <person name="Rose D.J."/>
            <person name="Burland V."/>
            <person name="Kodoyianni V."/>
            <person name="Schwartz D.C."/>
            <person name="Blattner F.R."/>
        </authorList>
    </citation>
    <scope>NUCLEOTIDE SEQUENCE [LARGE SCALE GENOMIC DNA]</scope>
    <source>
        <strain>ATCC 700931 / Ty2</strain>
    </source>
</reference>
<organism>
    <name type="scientific">Salmonella typhi</name>
    <dbReference type="NCBI Taxonomy" id="90370"/>
    <lineage>
        <taxon>Bacteria</taxon>
        <taxon>Pseudomonadati</taxon>
        <taxon>Pseudomonadota</taxon>
        <taxon>Gammaproteobacteria</taxon>
        <taxon>Enterobacterales</taxon>
        <taxon>Enterobacteriaceae</taxon>
        <taxon>Salmonella</taxon>
    </lineage>
</organism>